<geneLocation type="chloroplast"/>
<keyword id="KW-0004">4Fe-4S</keyword>
<keyword id="KW-0150">Chloroplast</keyword>
<keyword id="KW-0249">Electron transport</keyword>
<keyword id="KW-0408">Iron</keyword>
<keyword id="KW-0411">Iron-sulfur</keyword>
<keyword id="KW-0472">Membrane</keyword>
<keyword id="KW-0479">Metal-binding</keyword>
<keyword id="KW-0560">Oxidoreductase</keyword>
<keyword id="KW-0602">Photosynthesis</keyword>
<keyword id="KW-0603">Photosystem I</keyword>
<keyword id="KW-0934">Plastid</keyword>
<keyword id="KW-0677">Repeat</keyword>
<keyword id="KW-0793">Thylakoid</keyword>
<keyword id="KW-0813">Transport</keyword>
<evidence type="ECO:0000250" key="1"/>
<evidence type="ECO:0000255" key="2">
    <source>
        <dbReference type="HAMAP-Rule" id="MF_01303"/>
    </source>
</evidence>
<name>PSAC_SACOF</name>
<organism>
    <name type="scientific">Saccharum officinarum</name>
    <name type="common">Sugarcane</name>
    <dbReference type="NCBI Taxonomy" id="4547"/>
    <lineage>
        <taxon>Eukaryota</taxon>
        <taxon>Viridiplantae</taxon>
        <taxon>Streptophyta</taxon>
        <taxon>Embryophyta</taxon>
        <taxon>Tracheophyta</taxon>
        <taxon>Spermatophyta</taxon>
        <taxon>Magnoliopsida</taxon>
        <taxon>Liliopsida</taxon>
        <taxon>Poales</taxon>
        <taxon>Poaceae</taxon>
        <taxon>PACMAD clade</taxon>
        <taxon>Panicoideae</taxon>
        <taxon>Andropogonodae</taxon>
        <taxon>Andropogoneae</taxon>
        <taxon>Saccharinae</taxon>
        <taxon>Saccharum</taxon>
        <taxon>Saccharum officinarum species complex</taxon>
    </lineage>
</organism>
<accession>Q6ENP6</accession>
<sequence length="81" mass="8899">MSHSVKIYDTCIGCTQCVRACPTDVLEMIPWDGCKAKQIASAPRTEDCVGCKRCESACPTDFLSVRVYLGPETTRSMALSY</sequence>
<feature type="initiator methionine" description="Removed" evidence="1">
    <location>
        <position position="1"/>
    </location>
</feature>
<feature type="chain" id="PRO_0000062003" description="Photosystem I iron-sulfur center">
    <location>
        <begin position="2"/>
        <end position="81"/>
    </location>
</feature>
<feature type="domain" description="4Fe-4S ferredoxin-type 1" evidence="2">
    <location>
        <begin position="2"/>
        <end position="31"/>
    </location>
</feature>
<feature type="domain" description="4Fe-4S ferredoxin-type 2" evidence="2">
    <location>
        <begin position="39"/>
        <end position="68"/>
    </location>
</feature>
<feature type="binding site" evidence="2">
    <location>
        <position position="11"/>
    </location>
    <ligand>
        <name>[4Fe-4S] cluster</name>
        <dbReference type="ChEBI" id="CHEBI:49883"/>
        <label>1</label>
    </ligand>
</feature>
<feature type="binding site" evidence="2">
    <location>
        <position position="14"/>
    </location>
    <ligand>
        <name>[4Fe-4S] cluster</name>
        <dbReference type="ChEBI" id="CHEBI:49883"/>
        <label>1</label>
    </ligand>
</feature>
<feature type="binding site" evidence="2">
    <location>
        <position position="17"/>
    </location>
    <ligand>
        <name>[4Fe-4S] cluster</name>
        <dbReference type="ChEBI" id="CHEBI:49883"/>
        <label>1</label>
    </ligand>
</feature>
<feature type="binding site" evidence="2">
    <location>
        <position position="21"/>
    </location>
    <ligand>
        <name>[4Fe-4S] cluster</name>
        <dbReference type="ChEBI" id="CHEBI:49883"/>
        <label>2</label>
    </ligand>
</feature>
<feature type="binding site" evidence="2">
    <location>
        <position position="48"/>
    </location>
    <ligand>
        <name>[4Fe-4S] cluster</name>
        <dbReference type="ChEBI" id="CHEBI:49883"/>
        <label>2</label>
    </ligand>
</feature>
<feature type="binding site" evidence="2">
    <location>
        <position position="51"/>
    </location>
    <ligand>
        <name>[4Fe-4S] cluster</name>
        <dbReference type="ChEBI" id="CHEBI:49883"/>
        <label>2</label>
    </ligand>
</feature>
<feature type="binding site" evidence="2">
    <location>
        <position position="54"/>
    </location>
    <ligand>
        <name>[4Fe-4S] cluster</name>
        <dbReference type="ChEBI" id="CHEBI:49883"/>
        <label>2</label>
    </ligand>
</feature>
<feature type="binding site" evidence="2">
    <location>
        <position position="58"/>
    </location>
    <ligand>
        <name>[4Fe-4S] cluster</name>
        <dbReference type="ChEBI" id="CHEBI:49883"/>
        <label>1</label>
    </ligand>
</feature>
<comment type="function">
    <text evidence="2">Apoprotein for the two 4Fe-4S centers FA and FB of photosystem I (PSI); essential for photochemical activity. FB is the terminal electron acceptor of PSI, donating electrons to ferredoxin. The C-terminus interacts with PsaA/B/D and helps assemble the protein into the PSI complex. Required for binding of PsaD and PsaE to PSI. PSI is a plastocyanin-ferredoxin oxidoreductase, converting photonic excitation into a charge separation, which transfers an electron from the donor P700 chlorophyll pair to the spectroscopically characterized acceptors A0, A1, FX, FA and FB in turn.</text>
</comment>
<comment type="catalytic activity">
    <reaction evidence="2">
        <text>reduced [plastocyanin] + hnu + oxidized [2Fe-2S]-[ferredoxin] = oxidized [plastocyanin] + reduced [2Fe-2S]-[ferredoxin]</text>
        <dbReference type="Rhea" id="RHEA:30407"/>
        <dbReference type="Rhea" id="RHEA-COMP:10000"/>
        <dbReference type="Rhea" id="RHEA-COMP:10001"/>
        <dbReference type="Rhea" id="RHEA-COMP:10039"/>
        <dbReference type="Rhea" id="RHEA-COMP:10040"/>
        <dbReference type="ChEBI" id="CHEBI:29036"/>
        <dbReference type="ChEBI" id="CHEBI:30212"/>
        <dbReference type="ChEBI" id="CHEBI:33737"/>
        <dbReference type="ChEBI" id="CHEBI:33738"/>
        <dbReference type="ChEBI" id="CHEBI:49552"/>
        <dbReference type="EC" id="1.97.1.12"/>
    </reaction>
</comment>
<comment type="cofactor">
    <cofactor evidence="2">
        <name>[4Fe-4S] cluster</name>
        <dbReference type="ChEBI" id="CHEBI:49883"/>
    </cofactor>
    <text evidence="2">Binds 2 [4Fe-4S] clusters. Cluster 2 is most probably the spectroscopically characterized electron acceptor FA and cluster 1 is most probably FB.</text>
</comment>
<comment type="subunit">
    <text evidence="2">The eukaryotic PSI reaction center is composed of at least 11 subunits.</text>
</comment>
<comment type="subcellular location">
    <subcellularLocation>
        <location evidence="2">Plastid</location>
        <location evidence="2">Chloroplast thylakoid membrane</location>
        <topology evidence="2">Peripheral membrane protein</topology>
        <orientation evidence="2">Stromal side</orientation>
    </subcellularLocation>
</comment>
<protein>
    <recommendedName>
        <fullName evidence="2">Photosystem I iron-sulfur center</fullName>
        <ecNumber evidence="2">1.97.1.12</ecNumber>
    </recommendedName>
    <alternativeName>
        <fullName evidence="2">9 kDa polypeptide</fullName>
    </alternativeName>
    <alternativeName>
        <fullName evidence="2">PSI-C</fullName>
    </alternativeName>
    <alternativeName>
        <fullName evidence="2">Photosystem I subunit VII</fullName>
    </alternativeName>
    <alternativeName>
        <fullName evidence="2">PsaC</fullName>
    </alternativeName>
</protein>
<reference key="1">
    <citation type="journal article" date="2004" name="DNA Res.">
        <title>Complete nucleotide sequence of the sugarcane (Saccharum officinarum) chloroplast genome: a comparative analysis of four monocot chloroplast genomes.</title>
        <authorList>
            <person name="Asano T."/>
            <person name="Tsudzuki T."/>
            <person name="Takahashi S."/>
            <person name="Shimada H."/>
            <person name="Kadowaki K."/>
        </authorList>
    </citation>
    <scope>NUCLEOTIDE SEQUENCE [LARGE SCALE GENOMIC DNA]</scope>
</reference>
<gene>
    <name evidence="2" type="primary">psaC</name>
</gene>
<proteinExistence type="inferred from homology"/>
<dbReference type="EC" id="1.97.1.12" evidence="2"/>
<dbReference type="EMBL" id="AP006714">
    <property type="protein sequence ID" value="BAD27360.1"/>
    <property type="molecule type" value="Genomic_DNA"/>
</dbReference>
<dbReference type="RefSeq" id="YP_009389632.1">
    <property type="nucleotide sequence ID" value="NC_035224.1"/>
</dbReference>
<dbReference type="SMR" id="Q6ENP6"/>
<dbReference type="GeneID" id="33347777"/>
<dbReference type="GO" id="GO:0009535">
    <property type="term" value="C:chloroplast thylakoid membrane"/>
    <property type="evidence" value="ECO:0007669"/>
    <property type="project" value="UniProtKB-SubCell"/>
</dbReference>
<dbReference type="GO" id="GO:0009522">
    <property type="term" value="C:photosystem I"/>
    <property type="evidence" value="ECO:0007669"/>
    <property type="project" value="UniProtKB-KW"/>
</dbReference>
<dbReference type="GO" id="GO:0051539">
    <property type="term" value="F:4 iron, 4 sulfur cluster binding"/>
    <property type="evidence" value="ECO:0007669"/>
    <property type="project" value="UniProtKB-KW"/>
</dbReference>
<dbReference type="GO" id="GO:0009055">
    <property type="term" value="F:electron transfer activity"/>
    <property type="evidence" value="ECO:0007669"/>
    <property type="project" value="UniProtKB-UniRule"/>
</dbReference>
<dbReference type="GO" id="GO:0046872">
    <property type="term" value="F:metal ion binding"/>
    <property type="evidence" value="ECO:0007669"/>
    <property type="project" value="UniProtKB-KW"/>
</dbReference>
<dbReference type="GO" id="GO:0016491">
    <property type="term" value="F:oxidoreductase activity"/>
    <property type="evidence" value="ECO:0007669"/>
    <property type="project" value="UniProtKB-KW"/>
</dbReference>
<dbReference type="GO" id="GO:0009773">
    <property type="term" value="P:photosynthetic electron transport in photosystem I"/>
    <property type="evidence" value="ECO:0007669"/>
    <property type="project" value="InterPro"/>
</dbReference>
<dbReference type="FunFam" id="3.30.70.20:FF:000001">
    <property type="entry name" value="Photosystem I iron-sulfur center"/>
    <property type="match status" value="1"/>
</dbReference>
<dbReference type="Gene3D" id="3.30.70.20">
    <property type="match status" value="1"/>
</dbReference>
<dbReference type="HAMAP" id="MF_01303">
    <property type="entry name" value="PSI_PsaC"/>
    <property type="match status" value="1"/>
</dbReference>
<dbReference type="InterPro" id="IPR017896">
    <property type="entry name" value="4Fe4S_Fe-S-bd"/>
</dbReference>
<dbReference type="InterPro" id="IPR017900">
    <property type="entry name" value="4Fe4S_Fe_S_CS"/>
</dbReference>
<dbReference type="InterPro" id="IPR050157">
    <property type="entry name" value="PSI_iron-sulfur_center"/>
</dbReference>
<dbReference type="InterPro" id="IPR017491">
    <property type="entry name" value="PSI_PsaC"/>
</dbReference>
<dbReference type="NCBIfam" id="TIGR03048">
    <property type="entry name" value="PS_I_psaC"/>
    <property type="match status" value="1"/>
</dbReference>
<dbReference type="PANTHER" id="PTHR24960:SF79">
    <property type="entry name" value="PHOTOSYSTEM I IRON-SULFUR CENTER"/>
    <property type="match status" value="1"/>
</dbReference>
<dbReference type="PANTHER" id="PTHR24960">
    <property type="entry name" value="PHOTOSYSTEM I IRON-SULFUR CENTER-RELATED"/>
    <property type="match status" value="1"/>
</dbReference>
<dbReference type="Pfam" id="PF12838">
    <property type="entry name" value="Fer4_7"/>
    <property type="match status" value="1"/>
</dbReference>
<dbReference type="SUPFAM" id="SSF54862">
    <property type="entry name" value="4Fe-4S ferredoxins"/>
    <property type="match status" value="1"/>
</dbReference>
<dbReference type="PROSITE" id="PS00198">
    <property type="entry name" value="4FE4S_FER_1"/>
    <property type="match status" value="2"/>
</dbReference>
<dbReference type="PROSITE" id="PS51379">
    <property type="entry name" value="4FE4S_FER_2"/>
    <property type="match status" value="2"/>
</dbReference>